<protein>
    <recommendedName>
        <fullName evidence="1">D-phenylhydantoinase</fullName>
        <ecNumber evidence="1">3.5.2.-</ecNumber>
    </recommendedName>
    <alternativeName>
        <fullName evidence="1">Hydantoin-utilizing enzyme HyuA</fullName>
    </alternativeName>
</protein>
<feature type="chain" id="PRO_0000317654" description="D-phenylhydantoinase">
    <location>
        <begin position="1"/>
        <end position="461"/>
    </location>
</feature>
<feature type="binding site" evidence="1">
    <location>
        <position position="59"/>
    </location>
    <ligand>
        <name>a divalent metal cation</name>
        <dbReference type="ChEBI" id="CHEBI:60240"/>
        <label>1</label>
    </ligand>
</feature>
<feature type="binding site" evidence="1">
    <location>
        <position position="61"/>
    </location>
    <ligand>
        <name>a divalent metal cation</name>
        <dbReference type="ChEBI" id="CHEBI:60240"/>
        <label>1</label>
    </ligand>
</feature>
<feature type="binding site" description="via carbamate group" evidence="1">
    <location>
        <position position="151"/>
    </location>
    <ligand>
        <name>a divalent metal cation</name>
        <dbReference type="ChEBI" id="CHEBI:60240"/>
        <label>1</label>
    </ligand>
</feature>
<feature type="binding site" description="via carbamate group" evidence="1">
    <location>
        <position position="151"/>
    </location>
    <ligand>
        <name>a divalent metal cation</name>
        <dbReference type="ChEBI" id="CHEBI:60240"/>
        <label>2</label>
    </ligand>
</feature>
<feature type="binding site" evidence="1">
    <location>
        <position position="156"/>
    </location>
    <ligand>
        <name>substrate</name>
    </ligand>
</feature>
<feature type="binding site" evidence="1">
    <location>
        <position position="182"/>
    </location>
    <ligand>
        <name>a divalent metal cation</name>
        <dbReference type="ChEBI" id="CHEBI:60240"/>
        <label>2</label>
    </ligand>
</feature>
<feature type="binding site" evidence="1">
    <location>
        <position position="239"/>
    </location>
    <ligand>
        <name>a divalent metal cation</name>
        <dbReference type="ChEBI" id="CHEBI:60240"/>
        <label>2</label>
    </ligand>
</feature>
<feature type="binding site" evidence="1">
    <location>
        <position position="286"/>
    </location>
    <ligand>
        <name>substrate</name>
    </ligand>
</feature>
<feature type="binding site" evidence="1">
    <location>
        <position position="313"/>
    </location>
    <ligand>
        <name>a divalent metal cation</name>
        <dbReference type="ChEBI" id="CHEBI:60240"/>
        <label>1</label>
    </ligand>
</feature>
<feature type="binding site" evidence="1">
    <location>
        <position position="335"/>
    </location>
    <ligand>
        <name>substrate</name>
    </ligand>
</feature>
<feature type="modified residue" description="N6-carboxylysine" evidence="1">
    <location>
        <position position="151"/>
    </location>
</feature>
<comment type="function">
    <text evidence="1">Catalyzes the stereospecific hydrolysis of the cyclic amide bond of D-hydantoin derivatives with an aromatic side chains at the 5'-position. Has no activity on dihydropyrimidines. The physiological function is unknown.</text>
</comment>
<comment type="catalytic activity">
    <reaction evidence="1">
        <text>D-5-phenylhydantoin + H2O = N-carbamoyl-D-phenylglycine + H(+)</text>
        <dbReference type="Rhea" id="RHEA:51664"/>
        <dbReference type="ChEBI" id="CHEBI:15377"/>
        <dbReference type="ChEBI" id="CHEBI:15378"/>
        <dbReference type="ChEBI" id="CHEBI:140750"/>
        <dbReference type="ChEBI" id="CHEBI:140758"/>
    </reaction>
</comment>
<comment type="cofactor">
    <cofactor evidence="1">
        <name>a divalent metal cation</name>
        <dbReference type="ChEBI" id="CHEBI:60240"/>
    </cofactor>
    <text evidence="1">Binds 2 divalent metal cations per subunit.</text>
</comment>
<comment type="subunit">
    <text evidence="1">Homotetramer.</text>
</comment>
<comment type="PTM">
    <text evidence="1">Carboxylation allows a single lysine to coordinate two divalent metal cations.</text>
</comment>
<comment type="similarity">
    <text evidence="1">Belongs to the metallo-dependent hydrolases superfamily. Hydantoinase/dihydropyrimidinase family.</text>
</comment>
<comment type="sequence caution" evidence="2">
    <conflict type="erroneous initiation">
        <sequence resource="EMBL-CDS" id="AAN81896"/>
    </conflict>
</comment>
<organism>
    <name type="scientific">Escherichia coli O6:H1 (strain CFT073 / ATCC 700928 / UPEC)</name>
    <dbReference type="NCBI Taxonomy" id="199310"/>
    <lineage>
        <taxon>Bacteria</taxon>
        <taxon>Pseudomonadati</taxon>
        <taxon>Pseudomonadota</taxon>
        <taxon>Gammaproteobacteria</taxon>
        <taxon>Enterobacterales</taxon>
        <taxon>Enterobacteriaceae</taxon>
        <taxon>Escherichia</taxon>
    </lineage>
</organism>
<dbReference type="EC" id="3.5.2.-" evidence="1"/>
<dbReference type="EMBL" id="AE014075">
    <property type="protein sequence ID" value="AAN81896.1"/>
    <property type="status" value="ALT_INIT"/>
    <property type="molecule type" value="Genomic_DNA"/>
</dbReference>
<dbReference type="RefSeq" id="WP_001264434.1">
    <property type="nucleotide sequence ID" value="NZ_CP051263.1"/>
</dbReference>
<dbReference type="SMR" id="Q8FE90"/>
<dbReference type="STRING" id="199310.c3451"/>
<dbReference type="KEGG" id="ecc:c3451"/>
<dbReference type="eggNOG" id="COG0044">
    <property type="taxonomic scope" value="Bacteria"/>
</dbReference>
<dbReference type="HOGENOM" id="CLU_015572_2_0_6"/>
<dbReference type="Proteomes" id="UP000001410">
    <property type="component" value="Chromosome"/>
</dbReference>
<dbReference type="GO" id="GO:0005829">
    <property type="term" value="C:cytosol"/>
    <property type="evidence" value="ECO:0007669"/>
    <property type="project" value="TreeGrafter"/>
</dbReference>
<dbReference type="GO" id="GO:0016812">
    <property type="term" value="F:hydrolase activity, acting on carbon-nitrogen (but not peptide) bonds, in cyclic amides"/>
    <property type="evidence" value="ECO:0007669"/>
    <property type="project" value="UniProtKB-UniRule"/>
</dbReference>
<dbReference type="GO" id="GO:0046872">
    <property type="term" value="F:metal ion binding"/>
    <property type="evidence" value="ECO:0007669"/>
    <property type="project" value="UniProtKB-KW"/>
</dbReference>
<dbReference type="GO" id="GO:0006208">
    <property type="term" value="P:pyrimidine nucleobase catabolic process"/>
    <property type="evidence" value="ECO:0007669"/>
    <property type="project" value="InterPro"/>
</dbReference>
<dbReference type="CDD" id="cd01314">
    <property type="entry name" value="D-HYD"/>
    <property type="match status" value="1"/>
</dbReference>
<dbReference type="FunFam" id="3.20.20.140:FF:000026">
    <property type="entry name" value="D-phenylhydantoinase"/>
    <property type="match status" value="1"/>
</dbReference>
<dbReference type="Gene3D" id="3.20.20.140">
    <property type="entry name" value="Metal-dependent hydrolases"/>
    <property type="match status" value="1"/>
</dbReference>
<dbReference type="Gene3D" id="2.30.40.10">
    <property type="entry name" value="Urease, subunit C, domain 1"/>
    <property type="match status" value="1"/>
</dbReference>
<dbReference type="HAMAP" id="MF_01644">
    <property type="entry name" value="D_hydantoinase"/>
    <property type="match status" value="1"/>
</dbReference>
<dbReference type="InterPro" id="IPR006680">
    <property type="entry name" value="Amidohydro-rel"/>
</dbReference>
<dbReference type="InterPro" id="IPR023766">
    <property type="entry name" value="D_phenylhydantoinase"/>
</dbReference>
<dbReference type="InterPro" id="IPR011778">
    <property type="entry name" value="Hydantoinase/dihydroPyrase"/>
</dbReference>
<dbReference type="InterPro" id="IPR011059">
    <property type="entry name" value="Metal-dep_hydrolase_composite"/>
</dbReference>
<dbReference type="InterPro" id="IPR032466">
    <property type="entry name" value="Metal_Hydrolase"/>
</dbReference>
<dbReference type="InterPro" id="IPR050378">
    <property type="entry name" value="Metallo-dep_Hydrolases_sf"/>
</dbReference>
<dbReference type="NCBIfam" id="TIGR02033">
    <property type="entry name" value="D-hydantoinase"/>
    <property type="match status" value="1"/>
</dbReference>
<dbReference type="PANTHER" id="PTHR11647:SF1">
    <property type="entry name" value="COLLAPSIN RESPONSE MEDIATOR PROTEIN"/>
    <property type="match status" value="1"/>
</dbReference>
<dbReference type="PANTHER" id="PTHR11647">
    <property type="entry name" value="HYDRANTOINASE/DIHYDROPYRIMIDINASE FAMILY MEMBER"/>
    <property type="match status" value="1"/>
</dbReference>
<dbReference type="Pfam" id="PF01979">
    <property type="entry name" value="Amidohydro_1"/>
    <property type="match status" value="1"/>
</dbReference>
<dbReference type="SUPFAM" id="SSF51338">
    <property type="entry name" value="Composite domain of metallo-dependent hydrolases"/>
    <property type="match status" value="2"/>
</dbReference>
<dbReference type="SUPFAM" id="SSF51556">
    <property type="entry name" value="Metallo-dependent hydrolases"/>
    <property type="match status" value="1"/>
</dbReference>
<evidence type="ECO:0000255" key="1">
    <source>
        <dbReference type="HAMAP-Rule" id="MF_01644"/>
    </source>
</evidence>
<evidence type="ECO:0000305" key="2"/>
<reference key="1">
    <citation type="journal article" date="2002" name="Proc. Natl. Acad. Sci. U.S.A.">
        <title>Extensive mosaic structure revealed by the complete genome sequence of uropathogenic Escherichia coli.</title>
        <authorList>
            <person name="Welch R.A."/>
            <person name="Burland V."/>
            <person name="Plunkett G. III"/>
            <person name="Redford P."/>
            <person name="Roesch P."/>
            <person name="Rasko D."/>
            <person name="Buckles E.L."/>
            <person name="Liou S.-R."/>
            <person name="Boutin A."/>
            <person name="Hackett J."/>
            <person name="Stroud D."/>
            <person name="Mayhew G.F."/>
            <person name="Rose D.J."/>
            <person name="Zhou S."/>
            <person name="Schwartz D.C."/>
            <person name="Perna N.T."/>
            <person name="Mobley H.L.T."/>
            <person name="Donnenberg M.S."/>
            <person name="Blattner F.R."/>
        </authorList>
    </citation>
    <scope>NUCLEOTIDE SEQUENCE [LARGE SCALE GENOMIC DNA]</scope>
    <source>
        <strain>CFT073 / ATCC 700928 / UPEC</strain>
    </source>
</reference>
<gene>
    <name evidence="1" type="primary">hyuA</name>
    <name type="synonym">ygeZ</name>
    <name type="ordered locus">c3451</name>
</gene>
<name>PHYDA_ECOL6</name>
<accession>Q8FE90</accession>
<keyword id="KW-0378">Hydrolase</keyword>
<keyword id="KW-0479">Metal-binding</keyword>
<keyword id="KW-1185">Reference proteome</keyword>
<sequence length="461" mass="50955">MRVLIKNGIVVNADGQAKQDLLIESGIVRQLGTDISPQLPCEEIDASGCYVFPGGVDVHTHFNIDVGIARSCDDFFTGTRAAACGGTTTIIDHMGFGPNGCRLRHQLEVYRGYAAHKAVIDYSFHGVIQHINHAILDEIPMMVEEGLSSFKLYLTYQYKLNDDEVLQALRRLHESGALTTVHPENDAAIASKRAEFIAAGLTAPRYHALSRPLECEAEAIARMINLAQIAGNAPLYIVHLSNGLGLDYLRLARANHQPVWVETCPQYLLLDERSYDTEDGMKFILSPPLRNVREQDKLWCGISDGAIDVVATDHCTFSMAQRLQISKGDFSRCPNGLPGVENRMQLLFSSGVMTGRISPERFVELTSAMPARLFGLWPQKGLLAPGSDGDVVIIDPRQSQQIQHRHLHDNADYSPWEGFTCQGAIVRTLSRGETIFCDGTFTGKAGRGRFLRRKPFVPPVL</sequence>
<proteinExistence type="inferred from homology"/>